<keyword id="KW-0255">Endonuclease</keyword>
<keyword id="KW-0378">Hydrolase</keyword>
<keyword id="KW-0540">Nuclease</keyword>
<keyword id="KW-1185">Reference proteome</keyword>
<keyword id="KW-0694">RNA-binding</keyword>
<keyword id="KW-0819">tRNA processing</keyword>
<proteinExistence type="inferred from homology"/>
<accession>A7MN01</accession>
<gene>
    <name evidence="1" type="primary">rnpA</name>
    <name type="ordered locus">ESA_03977</name>
</gene>
<organism>
    <name type="scientific">Cronobacter sakazakii (strain ATCC BAA-894)</name>
    <name type="common">Enterobacter sakazakii</name>
    <dbReference type="NCBI Taxonomy" id="290339"/>
    <lineage>
        <taxon>Bacteria</taxon>
        <taxon>Pseudomonadati</taxon>
        <taxon>Pseudomonadota</taxon>
        <taxon>Gammaproteobacteria</taxon>
        <taxon>Enterobacterales</taxon>
        <taxon>Enterobacteriaceae</taxon>
        <taxon>Cronobacter</taxon>
    </lineage>
</organism>
<reference key="1">
    <citation type="journal article" date="2010" name="PLoS ONE">
        <title>Genome sequence of Cronobacter sakazakii BAA-894 and comparative genomic hybridization analysis with other Cronobacter species.</title>
        <authorList>
            <person name="Kucerova E."/>
            <person name="Clifton S.W."/>
            <person name="Xia X.Q."/>
            <person name="Long F."/>
            <person name="Porwollik S."/>
            <person name="Fulton L."/>
            <person name="Fronick C."/>
            <person name="Minx P."/>
            <person name="Kyung K."/>
            <person name="Warren W."/>
            <person name="Fulton R."/>
            <person name="Feng D."/>
            <person name="Wollam A."/>
            <person name="Shah N."/>
            <person name="Bhonagiri V."/>
            <person name="Nash W.E."/>
            <person name="Hallsworth-Pepin K."/>
            <person name="Wilson R.K."/>
            <person name="McClelland M."/>
            <person name="Forsythe S.J."/>
        </authorList>
    </citation>
    <scope>NUCLEOTIDE SEQUENCE [LARGE SCALE GENOMIC DNA]</scope>
    <source>
        <strain>ATCC BAA-894</strain>
    </source>
</reference>
<protein>
    <recommendedName>
        <fullName evidence="1">Ribonuclease P protein component</fullName>
        <shortName evidence="1">RNase P protein</shortName>
        <shortName evidence="1">RNaseP protein</shortName>
        <ecNumber evidence="1">3.1.26.5</ecNumber>
    </recommendedName>
    <alternativeName>
        <fullName evidence="1">Protein C5</fullName>
    </alternativeName>
</protein>
<sequence length="119" mass="13908">MVKLAFPRELRLLTPAHFTFVFQQPQRAGTPQITILGRLNSLGHPRIGLTVAKKNVKRAHERNRIKRLTRESFRLRQHELPPMDFVVVAKRGIADLDNRELSEALEKLWRRHCRLVRGS</sequence>
<feature type="chain" id="PRO_1000021407" description="Ribonuclease P protein component">
    <location>
        <begin position="1"/>
        <end position="119"/>
    </location>
</feature>
<dbReference type="EC" id="3.1.26.5" evidence="1"/>
<dbReference type="EMBL" id="CP000783">
    <property type="protein sequence ID" value="ABU79163.1"/>
    <property type="molecule type" value="Genomic_DNA"/>
</dbReference>
<dbReference type="RefSeq" id="WP_004386002.1">
    <property type="nucleotide sequence ID" value="NC_009778.1"/>
</dbReference>
<dbReference type="SMR" id="A7MN01"/>
<dbReference type="GeneID" id="92214980"/>
<dbReference type="KEGG" id="esa:ESA_03977"/>
<dbReference type="HOGENOM" id="CLU_117179_11_0_6"/>
<dbReference type="Proteomes" id="UP000000260">
    <property type="component" value="Chromosome"/>
</dbReference>
<dbReference type="GO" id="GO:0030677">
    <property type="term" value="C:ribonuclease P complex"/>
    <property type="evidence" value="ECO:0007669"/>
    <property type="project" value="TreeGrafter"/>
</dbReference>
<dbReference type="GO" id="GO:0042781">
    <property type="term" value="F:3'-tRNA processing endoribonuclease activity"/>
    <property type="evidence" value="ECO:0007669"/>
    <property type="project" value="TreeGrafter"/>
</dbReference>
<dbReference type="GO" id="GO:0004526">
    <property type="term" value="F:ribonuclease P activity"/>
    <property type="evidence" value="ECO:0007669"/>
    <property type="project" value="UniProtKB-UniRule"/>
</dbReference>
<dbReference type="GO" id="GO:0000049">
    <property type="term" value="F:tRNA binding"/>
    <property type="evidence" value="ECO:0007669"/>
    <property type="project" value="UniProtKB-UniRule"/>
</dbReference>
<dbReference type="GO" id="GO:0001682">
    <property type="term" value="P:tRNA 5'-leader removal"/>
    <property type="evidence" value="ECO:0007669"/>
    <property type="project" value="UniProtKB-UniRule"/>
</dbReference>
<dbReference type="FunFam" id="3.30.230.10:FF:000016">
    <property type="entry name" value="Ribonuclease P protein component"/>
    <property type="match status" value="1"/>
</dbReference>
<dbReference type="Gene3D" id="3.30.230.10">
    <property type="match status" value="1"/>
</dbReference>
<dbReference type="HAMAP" id="MF_00227">
    <property type="entry name" value="RNase_P"/>
    <property type="match status" value="1"/>
</dbReference>
<dbReference type="InterPro" id="IPR020568">
    <property type="entry name" value="Ribosomal_Su5_D2-typ_SF"/>
</dbReference>
<dbReference type="InterPro" id="IPR014721">
    <property type="entry name" value="Ribsml_uS5_D2-typ_fold_subgr"/>
</dbReference>
<dbReference type="InterPro" id="IPR000100">
    <property type="entry name" value="RNase_P"/>
</dbReference>
<dbReference type="InterPro" id="IPR020539">
    <property type="entry name" value="RNase_P_CS"/>
</dbReference>
<dbReference type="NCBIfam" id="TIGR00188">
    <property type="entry name" value="rnpA"/>
    <property type="match status" value="1"/>
</dbReference>
<dbReference type="PANTHER" id="PTHR33992">
    <property type="entry name" value="RIBONUCLEASE P PROTEIN COMPONENT"/>
    <property type="match status" value="1"/>
</dbReference>
<dbReference type="PANTHER" id="PTHR33992:SF1">
    <property type="entry name" value="RIBONUCLEASE P PROTEIN COMPONENT"/>
    <property type="match status" value="1"/>
</dbReference>
<dbReference type="Pfam" id="PF00825">
    <property type="entry name" value="Ribonuclease_P"/>
    <property type="match status" value="1"/>
</dbReference>
<dbReference type="SUPFAM" id="SSF54211">
    <property type="entry name" value="Ribosomal protein S5 domain 2-like"/>
    <property type="match status" value="1"/>
</dbReference>
<dbReference type="PROSITE" id="PS00648">
    <property type="entry name" value="RIBONUCLEASE_P"/>
    <property type="match status" value="1"/>
</dbReference>
<name>RNPA_CROS8</name>
<comment type="function">
    <text evidence="1">RNaseP catalyzes the removal of the 5'-leader sequence from pre-tRNA to produce the mature 5'-terminus. It can also cleave other RNA substrates such as 4.5S RNA. The protein component plays an auxiliary but essential role in vivo by binding to the 5'-leader sequence and broadening the substrate specificity of the ribozyme.</text>
</comment>
<comment type="catalytic activity">
    <reaction evidence="1">
        <text>Endonucleolytic cleavage of RNA, removing 5'-extranucleotides from tRNA precursor.</text>
        <dbReference type="EC" id="3.1.26.5"/>
    </reaction>
</comment>
<comment type="subunit">
    <text evidence="1">Consists of a catalytic RNA component (M1 or rnpB) and a protein subunit.</text>
</comment>
<comment type="similarity">
    <text evidence="1">Belongs to the RnpA family.</text>
</comment>
<evidence type="ECO:0000255" key="1">
    <source>
        <dbReference type="HAMAP-Rule" id="MF_00227"/>
    </source>
</evidence>